<evidence type="ECO:0000255" key="1">
    <source>
        <dbReference type="HAMAP-Rule" id="MF_00396"/>
    </source>
</evidence>
<dbReference type="EMBL" id="CP000435">
    <property type="protein sequence ID" value="ABI46120.1"/>
    <property type="molecule type" value="Genomic_DNA"/>
</dbReference>
<dbReference type="RefSeq" id="WP_006852199.1">
    <property type="nucleotide sequence ID" value="NC_008319.1"/>
</dbReference>
<dbReference type="SMR" id="Q0IBQ6"/>
<dbReference type="STRING" id="64471.sync_0903"/>
<dbReference type="KEGG" id="syg:sync_0903"/>
<dbReference type="eggNOG" id="ENOG502ZN58">
    <property type="taxonomic scope" value="Bacteria"/>
</dbReference>
<dbReference type="HOGENOM" id="CLU_216743_1_0_3"/>
<dbReference type="Proteomes" id="UP000001961">
    <property type="component" value="Chromosome"/>
</dbReference>
<dbReference type="GO" id="GO:0009512">
    <property type="term" value="C:cytochrome b6f complex"/>
    <property type="evidence" value="ECO:0007669"/>
    <property type="project" value="InterPro"/>
</dbReference>
<dbReference type="GO" id="GO:0031676">
    <property type="term" value="C:plasma membrane-derived thylakoid membrane"/>
    <property type="evidence" value="ECO:0007669"/>
    <property type="project" value="UniProtKB-SubCell"/>
</dbReference>
<dbReference type="GO" id="GO:0009055">
    <property type="term" value="F:electron transfer activity"/>
    <property type="evidence" value="ECO:0007669"/>
    <property type="project" value="UniProtKB-UniRule"/>
</dbReference>
<dbReference type="GO" id="GO:0015979">
    <property type="term" value="P:photosynthesis"/>
    <property type="evidence" value="ECO:0007669"/>
    <property type="project" value="UniProtKB-KW"/>
</dbReference>
<dbReference type="HAMAP" id="MF_00396">
    <property type="entry name" value="Cytb6_f_PetM"/>
    <property type="match status" value="1"/>
</dbReference>
<dbReference type="InterPro" id="IPR012595">
    <property type="entry name" value="PetM_cyt_b6/f_cplx_su7"/>
</dbReference>
<dbReference type="NCBIfam" id="NF008826">
    <property type="entry name" value="PRK11876.1-2"/>
    <property type="match status" value="1"/>
</dbReference>
<dbReference type="Pfam" id="PF08041">
    <property type="entry name" value="PetM"/>
    <property type="match status" value="1"/>
</dbReference>
<accession>Q0IBQ6</accession>
<name>PETM_SYNS3</name>
<feature type="chain" id="PRO_1000049593" description="Cytochrome b6-f complex subunit 7">
    <location>
        <begin position="1"/>
        <end position="32"/>
    </location>
</feature>
<feature type="transmembrane region" description="Helical" evidence="1">
    <location>
        <begin position="9"/>
        <end position="27"/>
    </location>
</feature>
<proteinExistence type="inferred from homology"/>
<sequence>MASEIFGIAVVFWVLIPVGLAGGALLLKLQGD</sequence>
<reference key="1">
    <citation type="journal article" date="2006" name="Proc. Natl. Acad. Sci. U.S.A.">
        <title>Genome sequence of Synechococcus CC9311: insights into adaptation to a coastal environment.</title>
        <authorList>
            <person name="Palenik B."/>
            <person name="Ren Q."/>
            <person name="Dupont C.L."/>
            <person name="Myers G.S."/>
            <person name="Heidelberg J.F."/>
            <person name="Badger J.H."/>
            <person name="Madupu R."/>
            <person name="Nelson W.C."/>
            <person name="Brinkac L.M."/>
            <person name="Dodson R.J."/>
            <person name="Durkin A.S."/>
            <person name="Daugherty S.C."/>
            <person name="Sullivan S.A."/>
            <person name="Khouri H."/>
            <person name="Mohamoud Y."/>
            <person name="Halpin R."/>
            <person name="Paulsen I.T."/>
        </authorList>
    </citation>
    <scope>NUCLEOTIDE SEQUENCE [LARGE SCALE GENOMIC DNA]</scope>
    <source>
        <strain>CC9311</strain>
    </source>
</reference>
<protein>
    <recommendedName>
        <fullName evidence="1">Cytochrome b6-f complex subunit 7</fullName>
    </recommendedName>
    <alternativeName>
        <fullName evidence="1">Cytochrome b6-f complex subunit PetM</fullName>
    </alternativeName>
    <alternativeName>
        <fullName evidence="1">Cytochrome b6-f complex subunit VII</fullName>
    </alternativeName>
</protein>
<gene>
    <name evidence="1" type="primary">petM</name>
    <name type="ordered locus">sync_0903</name>
</gene>
<organism>
    <name type="scientific">Synechococcus sp. (strain CC9311)</name>
    <dbReference type="NCBI Taxonomy" id="64471"/>
    <lineage>
        <taxon>Bacteria</taxon>
        <taxon>Bacillati</taxon>
        <taxon>Cyanobacteriota</taxon>
        <taxon>Cyanophyceae</taxon>
        <taxon>Synechococcales</taxon>
        <taxon>Synechococcaceae</taxon>
        <taxon>Synechococcus</taxon>
    </lineage>
</organism>
<comment type="function">
    <text evidence="1">Component of the cytochrome b6-f complex, which mediates electron transfer between photosystem II (PSII) and photosystem I (PSI), cyclic electron flow around PSI, and state transitions.</text>
</comment>
<comment type="subunit">
    <text evidence="1">The 4 large subunits of the cytochrome b6-f complex are cytochrome b6, subunit IV (17 kDa polypeptide, PetD), cytochrome f and the Rieske protein, while the 4 small subunits are PetG, PetL, PetM and PetN. The complex functions as a dimer.</text>
</comment>
<comment type="subcellular location">
    <subcellularLocation>
        <location evidence="1">Cellular thylakoid membrane</location>
        <topology evidence="1">Single-pass membrane protein</topology>
    </subcellularLocation>
</comment>
<comment type="similarity">
    <text evidence="1">Belongs to the PetM family.</text>
</comment>
<keyword id="KW-0249">Electron transport</keyword>
<keyword id="KW-0472">Membrane</keyword>
<keyword id="KW-0602">Photosynthesis</keyword>
<keyword id="KW-1185">Reference proteome</keyword>
<keyword id="KW-0793">Thylakoid</keyword>
<keyword id="KW-0812">Transmembrane</keyword>
<keyword id="KW-1133">Transmembrane helix</keyword>
<keyword id="KW-0813">Transport</keyword>